<proteinExistence type="inferred from homology"/>
<keyword id="KW-0251">Elongation factor</keyword>
<keyword id="KW-0648">Protein biosynthesis</keyword>
<keyword id="KW-1185">Reference proteome</keyword>
<comment type="function">
    <text evidence="1">Promotes the exchange of GDP for GTP in EF-1-alpha/GDP, thus allowing the regeneration of EF-1-alpha/GTP that could then be used to form the ternary complex EF-1-alpha/GTP/AAtRNA.</text>
</comment>
<comment type="similarity">
    <text evidence="1">Belongs to the EF-1-beta/EF-1-delta family.</text>
</comment>
<gene>
    <name evidence="1" type="primary">ef1b</name>
    <name type="ordered locus">Mhun_2344</name>
</gene>
<accession>Q2FRY8</accession>
<dbReference type="EMBL" id="CP000254">
    <property type="protein sequence ID" value="ABD42048.1"/>
    <property type="molecule type" value="Genomic_DNA"/>
</dbReference>
<dbReference type="RefSeq" id="WP_011449306.1">
    <property type="nucleotide sequence ID" value="NC_007796.1"/>
</dbReference>
<dbReference type="SMR" id="Q2FRY8"/>
<dbReference type="FunCoup" id="Q2FRY8">
    <property type="interactions" value="5"/>
</dbReference>
<dbReference type="STRING" id="323259.Mhun_2344"/>
<dbReference type="EnsemblBacteria" id="ABD42048">
    <property type="protein sequence ID" value="ABD42048"/>
    <property type="gene ID" value="Mhun_2344"/>
</dbReference>
<dbReference type="GeneID" id="3923280"/>
<dbReference type="KEGG" id="mhu:Mhun_2344"/>
<dbReference type="eggNOG" id="arCOG01988">
    <property type="taxonomic scope" value="Archaea"/>
</dbReference>
<dbReference type="HOGENOM" id="CLU_165896_0_0_2"/>
<dbReference type="InParanoid" id="Q2FRY8"/>
<dbReference type="OrthoDB" id="84643at2157"/>
<dbReference type="Proteomes" id="UP000001941">
    <property type="component" value="Chromosome"/>
</dbReference>
<dbReference type="GO" id="GO:0003746">
    <property type="term" value="F:translation elongation factor activity"/>
    <property type="evidence" value="ECO:0007669"/>
    <property type="project" value="UniProtKB-UniRule"/>
</dbReference>
<dbReference type="CDD" id="cd00292">
    <property type="entry name" value="EF1B"/>
    <property type="match status" value="1"/>
</dbReference>
<dbReference type="Gene3D" id="3.30.70.60">
    <property type="match status" value="1"/>
</dbReference>
<dbReference type="HAMAP" id="MF_00043">
    <property type="entry name" value="EF1_beta"/>
    <property type="match status" value="1"/>
</dbReference>
<dbReference type="InterPro" id="IPR036219">
    <property type="entry name" value="eEF-1beta-like_sf"/>
</dbReference>
<dbReference type="InterPro" id="IPR014038">
    <property type="entry name" value="EF1B_bsu/dsu_GNE"/>
</dbReference>
<dbReference type="InterPro" id="IPR014717">
    <property type="entry name" value="Transl_elong_EF1B/ribsomal_bS6"/>
</dbReference>
<dbReference type="InterPro" id="IPR004542">
    <property type="entry name" value="Transl_elong_EF1B_B_arc"/>
</dbReference>
<dbReference type="NCBIfam" id="TIGR00489">
    <property type="entry name" value="aEF-1_beta"/>
    <property type="match status" value="1"/>
</dbReference>
<dbReference type="NCBIfam" id="NF001670">
    <property type="entry name" value="PRK00435.1"/>
    <property type="match status" value="1"/>
</dbReference>
<dbReference type="PANTHER" id="PTHR39647">
    <property type="entry name" value="ELONGATION FACTOR 1-BETA"/>
    <property type="match status" value="1"/>
</dbReference>
<dbReference type="PANTHER" id="PTHR39647:SF1">
    <property type="entry name" value="ELONGATION FACTOR 1-BETA"/>
    <property type="match status" value="1"/>
</dbReference>
<dbReference type="Pfam" id="PF00736">
    <property type="entry name" value="EF1_GNE"/>
    <property type="match status" value="1"/>
</dbReference>
<dbReference type="PIRSF" id="PIRSF006521">
    <property type="entry name" value="Transl_elong_EF1B_B_arc"/>
    <property type="match status" value="1"/>
</dbReference>
<dbReference type="SMART" id="SM00888">
    <property type="entry name" value="EF1_GNE"/>
    <property type="match status" value="1"/>
</dbReference>
<dbReference type="SUPFAM" id="SSF54984">
    <property type="entry name" value="eEF-1beta-like"/>
    <property type="match status" value="1"/>
</dbReference>
<evidence type="ECO:0000255" key="1">
    <source>
        <dbReference type="HAMAP-Rule" id="MF_00043"/>
    </source>
</evidence>
<organism>
    <name type="scientific">Methanospirillum hungatei JF-1 (strain ATCC 27890 / DSM 864 / NBRC 100397 / JF-1)</name>
    <dbReference type="NCBI Taxonomy" id="323259"/>
    <lineage>
        <taxon>Archaea</taxon>
        <taxon>Methanobacteriati</taxon>
        <taxon>Methanobacteriota</taxon>
        <taxon>Stenosarchaea group</taxon>
        <taxon>Methanomicrobia</taxon>
        <taxon>Methanomicrobiales</taxon>
        <taxon>Methanospirillaceae</taxon>
        <taxon>Methanospirillum</taxon>
    </lineage>
</organism>
<name>EF1B_METHJ</name>
<reference key="1">
    <citation type="journal article" date="2016" name="Stand. Genomic Sci.">
        <title>Complete genome sequence of Methanospirillum hungatei type strain JF1.</title>
        <authorList>
            <person name="Gunsalus R.P."/>
            <person name="Cook L.E."/>
            <person name="Crable B."/>
            <person name="Rohlin L."/>
            <person name="McDonald E."/>
            <person name="Mouttaki H."/>
            <person name="Sieber J.R."/>
            <person name="Poweleit N."/>
            <person name="Zhou H."/>
            <person name="Lapidus A.L."/>
            <person name="Daligault H.E."/>
            <person name="Land M."/>
            <person name="Gilna P."/>
            <person name="Ivanova N."/>
            <person name="Kyrpides N."/>
            <person name="Culley D.E."/>
            <person name="McInerney M.J."/>
        </authorList>
    </citation>
    <scope>NUCLEOTIDE SEQUENCE [LARGE SCALE GENOMIC DNA]</scope>
    <source>
        <strain>ATCC 27890 / DSM 864 / NBRC 100397 / JF-1</strain>
    </source>
</reference>
<feature type="chain" id="PRO_0000366437" description="Elongation factor 1-beta">
    <location>
        <begin position="1"/>
        <end position="85"/>
    </location>
</feature>
<protein>
    <recommendedName>
        <fullName evidence="1">Elongation factor 1-beta</fullName>
        <shortName evidence="1">EF-1-beta</shortName>
    </recommendedName>
    <alternativeName>
        <fullName evidence="1">aEF-1beta</fullName>
    </alternativeName>
</protein>
<sequence>MGDVALIIKVMPESPEVNRETIVATIKEKFPRVQDIREEPIGFGLVAIKVALVVPDAEGQTETIEATLNAIDGVERAEIVESTLV</sequence>